<protein>
    <recommendedName>
        <fullName evidence="1">Acetate kinase</fullName>
        <ecNumber evidence="1">2.7.2.1</ecNumber>
    </recommendedName>
    <alternativeName>
        <fullName evidence="1">Acetokinase</fullName>
    </alternativeName>
</protein>
<reference key="1">
    <citation type="journal article" date="2008" name="Genome Res.">
        <title>Insights from the complete genome sequence of Mycobacterium marinum on the evolution of Mycobacterium tuberculosis.</title>
        <authorList>
            <person name="Stinear T.P."/>
            <person name="Seemann T."/>
            <person name="Harrison P.F."/>
            <person name="Jenkin G.A."/>
            <person name="Davies J.K."/>
            <person name="Johnson P.D."/>
            <person name="Abdellah Z."/>
            <person name="Arrowsmith C."/>
            <person name="Chillingworth T."/>
            <person name="Churcher C."/>
            <person name="Clarke K."/>
            <person name="Cronin A."/>
            <person name="Davis P."/>
            <person name="Goodhead I."/>
            <person name="Holroyd N."/>
            <person name="Jagels K."/>
            <person name="Lord A."/>
            <person name="Moule S."/>
            <person name="Mungall K."/>
            <person name="Norbertczak H."/>
            <person name="Quail M.A."/>
            <person name="Rabbinowitsch E."/>
            <person name="Walker D."/>
            <person name="White B."/>
            <person name="Whitehead S."/>
            <person name="Small P.L."/>
            <person name="Brosch R."/>
            <person name="Ramakrishnan L."/>
            <person name="Fischbach M.A."/>
            <person name="Parkhill J."/>
            <person name="Cole S.T."/>
        </authorList>
    </citation>
    <scope>NUCLEOTIDE SEQUENCE [LARGE SCALE GENOMIC DNA]</scope>
    <source>
        <strain>ATCC BAA-535 / M</strain>
    </source>
</reference>
<reference key="2">
    <citation type="submission" date="2012-02" db="PDB data bank">
        <title>Crystal structure of acetate kinase AckA from Mycobacterium marinum.</title>
        <authorList>
            <consortium name="Seattle structural genomics center for infectious disease (SSGCID)"/>
        </authorList>
    </citation>
    <scope>X-RAY CRYSTALLOGRAPHY (2.25 ANGSTROMS)</scope>
    <scope>SUBUNIT</scope>
    <source>
        <strain>ATCC BAA-535 / M</strain>
    </source>
</reference>
<sequence length="388" mass="41617">MSASRPNRVVLVLNSGSSSLKFQLVEPDSGMSRATGNIERIGEESSSVPDHDAALRRVFEILAEDDIDLQSCGLVAVGHRVVHGGKDFYEPTLLNDAVIGKLDELSPLAPLHNPPAVLCIRVARALLPDVPHIAVFDTAFFHQLPPAAATYAIDRELADVWKIRRYGFHGTSHEYVSQQAAEFLGKPIGDLNQIVLHLGNGASASAVAGGRPVETSMGLTPLEGLVMGTRSGDLDPGVIGYLWRTAKLGVDEIESMLNHRSGMLGLAGERDFRRLRAMIDDGDPAAELAYDVFIHRLRKYVGAYLAVLGHTDVVSFTAGIGEHDAAVRRDTLAGMAELGISLDERRNACPSGGARRISADDSPVTVLVIPTNEELAIARHCCSVLVAV</sequence>
<accession>B2HPZ3</accession>
<name>ACKA_MYCMM</name>
<gene>
    <name evidence="1" type="primary">ackA</name>
    <name type="ordered locus">MMAR_0711</name>
</gene>
<evidence type="ECO:0000255" key="1">
    <source>
        <dbReference type="HAMAP-Rule" id="MF_00020"/>
    </source>
</evidence>
<evidence type="ECO:0000305" key="2">
    <source ref="2"/>
</evidence>
<evidence type="ECO:0007829" key="3">
    <source>
        <dbReference type="PDB" id="4DQ8"/>
    </source>
</evidence>
<proteinExistence type="evidence at protein level"/>
<organism>
    <name type="scientific">Mycobacterium marinum (strain ATCC BAA-535 / M)</name>
    <dbReference type="NCBI Taxonomy" id="216594"/>
    <lineage>
        <taxon>Bacteria</taxon>
        <taxon>Bacillati</taxon>
        <taxon>Actinomycetota</taxon>
        <taxon>Actinomycetes</taxon>
        <taxon>Mycobacteriales</taxon>
        <taxon>Mycobacteriaceae</taxon>
        <taxon>Mycobacterium</taxon>
        <taxon>Mycobacterium ulcerans group</taxon>
    </lineage>
</organism>
<keyword id="KW-0002">3D-structure</keyword>
<keyword id="KW-0067">ATP-binding</keyword>
<keyword id="KW-0963">Cytoplasm</keyword>
<keyword id="KW-0418">Kinase</keyword>
<keyword id="KW-0460">Magnesium</keyword>
<keyword id="KW-0479">Metal-binding</keyword>
<keyword id="KW-0547">Nucleotide-binding</keyword>
<keyword id="KW-1185">Reference proteome</keyword>
<keyword id="KW-0808">Transferase</keyword>
<comment type="function">
    <text evidence="1">Catalyzes the formation of acetyl phosphate from acetate and ATP. Can also catalyze the reverse reaction.</text>
</comment>
<comment type="catalytic activity">
    <reaction evidence="1">
        <text>acetate + ATP = acetyl phosphate + ADP</text>
        <dbReference type="Rhea" id="RHEA:11352"/>
        <dbReference type="ChEBI" id="CHEBI:22191"/>
        <dbReference type="ChEBI" id="CHEBI:30089"/>
        <dbReference type="ChEBI" id="CHEBI:30616"/>
        <dbReference type="ChEBI" id="CHEBI:456216"/>
        <dbReference type="EC" id="2.7.2.1"/>
    </reaction>
</comment>
<comment type="cofactor">
    <cofactor evidence="1">
        <name>Mg(2+)</name>
        <dbReference type="ChEBI" id="CHEBI:18420"/>
    </cofactor>
    <cofactor evidence="1">
        <name>Mn(2+)</name>
        <dbReference type="ChEBI" id="CHEBI:29035"/>
    </cofactor>
    <text evidence="1">Mg(2+). Can also accept Mn(2+).</text>
</comment>
<comment type="pathway">
    <text evidence="1">Metabolic intermediate biosynthesis; acetyl-CoA biosynthesis; acetyl-CoA from acetate: step 1/2.</text>
</comment>
<comment type="subunit">
    <text evidence="2">Homodimer.</text>
</comment>
<comment type="subcellular location">
    <subcellularLocation>
        <location evidence="1">Cytoplasm</location>
    </subcellularLocation>
</comment>
<comment type="similarity">
    <text evidence="1">Belongs to the acetokinase family.</text>
</comment>
<dbReference type="EC" id="2.7.2.1" evidence="1"/>
<dbReference type="EMBL" id="CP000854">
    <property type="protein sequence ID" value="ACC39170.1"/>
    <property type="molecule type" value="Genomic_DNA"/>
</dbReference>
<dbReference type="RefSeq" id="WP_012392661.1">
    <property type="nucleotide sequence ID" value="NC_010612.1"/>
</dbReference>
<dbReference type="PDB" id="4DQ8">
    <property type="method" value="X-ray"/>
    <property type="resolution" value="2.25 A"/>
    <property type="chains" value="A/B=1-387"/>
</dbReference>
<dbReference type="PDBsum" id="4DQ8"/>
<dbReference type="SMR" id="B2HPZ3"/>
<dbReference type="STRING" id="216594.MMAR_0711"/>
<dbReference type="GeneID" id="34343053"/>
<dbReference type="KEGG" id="mmi:MMAR_0711"/>
<dbReference type="eggNOG" id="COG0282">
    <property type="taxonomic scope" value="Bacteria"/>
</dbReference>
<dbReference type="HOGENOM" id="CLU_020352_0_1_11"/>
<dbReference type="OrthoDB" id="9802453at2"/>
<dbReference type="UniPathway" id="UPA00340">
    <property type="reaction ID" value="UER00458"/>
</dbReference>
<dbReference type="EvolutionaryTrace" id="B2HPZ3"/>
<dbReference type="Proteomes" id="UP000001190">
    <property type="component" value="Chromosome"/>
</dbReference>
<dbReference type="GO" id="GO:0005737">
    <property type="term" value="C:cytoplasm"/>
    <property type="evidence" value="ECO:0007669"/>
    <property type="project" value="UniProtKB-SubCell"/>
</dbReference>
<dbReference type="GO" id="GO:0008776">
    <property type="term" value="F:acetate kinase activity"/>
    <property type="evidence" value="ECO:0007669"/>
    <property type="project" value="UniProtKB-UniRule"/>
</dbReference>
<dbReference type="GO" id="GO:0005524">
    <property type="term" value="F:ATP binding"/>
    <property type="evidence" value="ECO:0007669"/>
    <property type="project" value="UniProtKB-KW"/>
</dbReference>
<dbReference type="GO" id="GO:0000287">
    <property type="term" value="F:magnesium ion binding"/>
    <property type="evidence" value="ECO:0007669"/>
    <property type="project" value="UniProtKB-UniRule"/>
</dbReference>
<dbReference type="GO" id="GO:0006083">
    <property type="term" value="P:acetate metabolic process"/>
    <property type="evidence" value="ECO:0007669"/>
    <property type="project" value="TreeGrafter"/>
</dbReference>
<dbReference type="GO" id="GO:0006085">
    <property type="term" value="P:acetyl-CoA biosynthetic process"/>
    <property type="evidence" value="ECO:0007669"/>
    <property type="project" value="UniProtKB-UniRule"/>
</dbReference>
<dbReference type="CDD" id="cd24010">
    <property type="entry name" value="ASKHA_NBD_AcK_PK"/>
    <property type="match status" value="1"/>
</dbReference>
<dbReference type="Gene3D" id="3.30.420.40">
    <property type="match status" value="2"/>
</dbReference>
<dbReference type="HAMAP" id="MF_00020">
    <property type="entry name" value="Acetate_kinase"/>
    <property type="match status" value="1"/>
</dbReference>
<dbReference type="InterPro" id="IPR004372">
    <property type="entry name" value="Ac/propionate_kinase"/>
</dbReference>
<dbReference type="InterPro" id="IPR000890">
    <property type="entry name" value="Aliphatic_acid_kin_short-chain"/>
</dbReference>
<dbReference type="InterPro" id="IPR023865">
    <property type="entry name" value="Aliphatic_acid_kinase_CS"/>
</dbReference>
<dbReference type="InterPro" id="IPR043129">
    <property type="entry name" value="ATPase_NBD"/>
</dbReference>
<dbReference type="NCBIfam" id="TIGR00016">
    <property type="entry name" value="ackA"/>
    <property type="match status" value="1"/>
</dbReference>
<dbReference type="PANTHER" id="PTHR21060">
    <property type="entry name" value="ACETATE KINASE"/>
    <property type="match status" value="1"/>
</dbReference>
<dbReference type="PANTHER" id="PTHR21060:SF15">
    <property type="entry name" value="ACETATE KINASE-RELATED"/>
    <property type="match status" value="1"/>
</dbReference>
<dbReference type="Pfam" id="PF00871">
    <property type="entry name" value="Acetate_kinase"/>
    <property type="match status" value="1"/>
</dbReference>
<dbReference type="PIRSF" id="PIRSF000722">
    <property type="entry name" value="Acetate_prop_kin"/>
    <property type="match status" value="1"/>
</dbReference>
<dbReference type="PRINTS" id="PR00471">
    <property type="entry name" value="ACETATEKNASE"/>
</dbReference>
<dbReference type="SUPFAM" id="SSF53067">
    <property type="entry name" value="Actin-like ATPase domain"/>
    <property type="match status" value="2"/>
</dbReference>
<dbReference type="PROSITE" id="PS01075">
    <property type="entry name" value="ACETATE_KINASE_1"/>
    <property type="match status" value="1"/>
</dbReference>
<dbReference type="PROSITE" id="PS01076">
    <property type="entry name" value="ACETATE_KINASE_2"/>
    <property type="match status" value="1"/>
</dbReference>
<feature type="chain" id="PRO_0000421949" description="Acetate kinase">
    <location>
        <begin position="1"/>
        <end position="388"/>
    </location>
</feature>
<feature type="active site" description="Proton donor/acceptor" evidence="1">
    <location>
        <position position="137"/>
    </location>
</feature>
<feature type="binding site" evidence="1">
    <location>
        <position position="14"/>
    </location>
    <ligand>
        <name>Mg(2+)</name>
        <dbReference type="ChEBI" id="CHEBI:18420"/>
    </ligand>
</feature>
<feature type="binding site" evidence="1">
    <location>
        <position position="21"/>
    </location>
    <ligand>
        <name>ATP</name>
        <dbReference type="ChEBI" id="CHEBI:30616"/>
    </ligand>
</feature>
<feature type="binding site" evidence="1">
    <location>
        <position position="80"/>
    </location>
    <ligand>
        <name>substrate</name>
    </ligand>
</feature>
<feature type="binding site" evidence="1">
    <location>
        <begin position="197"/>
        <end position="201"/>
    </location>
    <ligand>
        <name>ATP</name>
        <dbReference type="ChEBI" id="CHEBI:30616"/>
    </ligand>
</feature>
<feature type="binding site" evidence="1">
    <location>
        <begin position="271"/>
        <end position="273"/>
    </location>
    <ligand>
        <name>ATP</name>
        <dbReference type="ChEBI" id="CHEBI:30616"/>
    </ligand>
</feature>
<feature type="binding site" evidence="1">
    <location>
        <begin position="319"/>
        <end position="323"/>
    </location>
    <ligand>
        <name>ATP</name>
        <dbReference type="ChEBI" id="CHEBI:30616"/>
    </ligand>
</feature>
<feature type="binding site" evidence="1">
    <location>
        <position position="373"/>
    </location>
    <ligand>
        <name>Mg(2+)</name>
        <dbReference type="ChEBI" id="CHEBI:18420"/>
    </ligand>
</feature>
<feature type="site" description="Transition state stabilizer" evidence="1">
    <location>
        <position position="169"/>
    </location>
</feature>
<feature type="site" description="Transition state stabilizer" evidence="1">
    <location>
        <position position="230"/>
    </location>
</feature>
<feature type="strand" evidence="3">
    <location>
        <begin position="9"/>
        <end position="15"/>
    </location>
</feature>
<feature type="strand" evidence="3">
    <location>
        <begin position="20"/>
        <end position="25"/>
    </location>
</feature>
<feature type="turn" evidence="3">
    <location>
        <begin position="27"/>
        <end position="29"/>
    </location>
</feature>
<feature type="strand" evidence="3">
    <location>
        <begin position="32"/>
        <end position="38"/>
    </location>
</feature>
<feature type="helix" evidence="3">
    <location>
        <begin position="51"/>
        <end position="64"/>
    </location>
</feature>
<feature type="helix" evidence="3">
    <location>
        <begin position="69"/>
        <end position="71"/>
    </location>
</feature>
<feature type="strand" evidence="3">
    <location>
        <begin position="74"/>
        <end position="82"/>
    </location>
</feature>
<feature type="turn" evidence="3">
    <location>
        <begin position="85"/>
        <end position="87"/>
    </location>
</feature>
<feature type="helix" evidence="3">
    <location>
        <begin position="96"/>
        <end position="105"/>
    </location>
</feature>
<feature type="helix" evidence="3">
    <location>
        <begin position="106"/>
        <end position="108"/>
    </location>
</feature>
<feature type="turn" evidence="3">
    <location>
        <begin position="110"/>
        <end position="112"/>
    </location>
</feature>
<feature type="helix" evidence="3">
    <location>
        <begin position="113"/>
        <end position="126"/>
    </location>
</feature>
<feature type="strand" evidence="3">
    <location>
        <begin position="132"/>
        <end position="136"/>
    </location>
</feature>
<feature type="helix" evidence="3">
    <location>
        <begin position="139"/>
        <end position="143"/>
    </location>
</feature>
<feature type="helix" evidence="3">
    <location>
        <begin position="146"/>
        <end position="149"/>
    </location>
</feature>
<feature type="helix" evidence="3">
    <location>
        <begin position="155"/>
        <end position="160"/>
    </location>
</feature>
<feature type="helix" evidence="3">
    <location>
        <begin position="170"/>
        <end position="184"/>
    </location>
</feature>
<feature type="helix" evidence="3">
    <location>
        <begin position="188"/>
        <end position="190"/>
    </location>
</feature>
<feature type="strand" evidence="3">
    <location>
        <begin position="192"/>
        <end position="208"/>
    </location>
</feature>
<feature type="strand" evidence="3">
    <location>
        <begin position="211"/>
        <end position="216"/>
    </location>
</feature>
<feature type="strand" evidence="3">
    <location>
        <begin position="223"/>
        <end position="225"/>
    </location>
</feature>
<feature type="helix" evidence="3">
    <location>
        <begin position="236"/>
        <end position="244"/>
    </location>
</feature>
<feature type="helix" evidence="3">
    <location>
        <begin position="250"/>
        <end position="259"/>
    </location>
</feature>
<feature type="helix" evidence="3">
    <location>
        <begin position="262"/>
        <end position="267"/>
    </location>
</feature>
<feature type="helix" evidence="3">
    <location>
        <begin position="272"/>
        <end position="280"/>
    </location>
</feature>
<feature type="helix" evidence="3">
    <location>
        <begin position="284"/>
        <end position="308"/>
    </location>
</feature>
<feature type="strand" evidence="3">
    <location>
        <begin position="313"/>
        <end position="317"/>
    </location>
</feature>
<feature type="helix" evidence="3">
    <location>
        <begin position="318"/>
        <end position="323"/>
    </location>
</feature>
<feature type="helix" evidence="3">
    <location>
        <begin position="325"/>
        <end position="332"/>
    </location>
</feature>
<feature type="helix" evidence="3">
    <location>
        <begin position="336"/>
        <end position="338"/>
    </location>
</feature>
<feature type="helix" evidence="3">
    <location>
        <begin position="344"/>
        <end position="348"/>
    </location>
</feature>
<feature type="strand" evidence="3">
    <location>
        <begin position="353"/>
        <end position="356"/>
    </location>
</feature>
<feature type="strand" evidence="3">
    <location>
        <begin position="363"/>
        <end position="368"/>
    </location>
</feature>
<feature type="helix" evidence="3">
    <location>
        <begin position="373"/>
        <end position="383"/>
    </location>
</feature>